<sequence>MLTLDTLNVMLAVSEEGLIEEMIIALLASPQLAVFFEKFPRLKAAITDDVPRWREALRSRLTDARVPPELTEEVMCYQQSQLLSTPQFIVQLPQILDLLHRLNSPWAEQARQLVDANSSITSALHTLFLQRWRLSLIVQATTLNQQLLEEEREQLLSEVQERMTLSGQLEPILADNNTGAGRLWDMSAGQLKRGDYQLIVKYGEFLNEQPELKRLAEQLGRSREAKSIPRNDAQMETFRTMVREPATVPEQVDGLQQSDDILRLLPPELATLGITELEYEFYRRLVEKQLLTYRLHGESLREKVIERPVVHKDYDEQPRGPFIVCVDTSGSMGGFNEQCAKAFCLALMRIALAENRRCYIMLFSTEIVRYELSGPQGIEQAIRFLNQQFRGGTDLASCFRAIMERLQSREWFDADAVVISDFIAQRLPDDVTSKVKELQRVHQHRFHAVAMSAHGKPGIMRIFDHIWRFDTGMRSRLLRRWRR</sequence>
<keyword id="KW-0143">Chaperone</keyword>
<keyword id="KW-0963">Cytoplasm</keyword>
<keyword id="KW-1185">Reference proteome</keyword>
<dbReference type="EMBL" id="CP000034">
    <property type="protein sequence ID" value="ABB63921.1"/>
    <property type="molecule type" value="Genomic_DNA"/>
</dbReference>
<dbReference type="RefSeq" id="WP_000956654.1">
    <property type="nucleotide sequence ID" value="NC_007606.1"/>
</dbReference>
<dbReference type="RefSeq" id="YP_405412.1">
    <property type="nucleotide sequence ID" value="NC_007606.1"/>
</dbReference>
<dbReference type="SMR" id="Q329T4"/>
<dbReference type="STRING" id="300267.SDY_4003"/>
<dbReference type="EnsemblBacteria" id="ABB63921">
    <property type="protein sequence ID" value="ABB63921"/>
    <property type="gene ID" value="SDY_4003"/>
</dbReference>
<dbReference type="KEGG" id="sdy:SDY_4003"/>
<dbReference type="PATRIC" id="fig|300267.13.peg.4715"/>
<dbReference type="HOGENOM" id="CLU_022130_0_0_6"/>
<dbReference type="Proteomes" id="UP000002716">
    <property type="component" value="Chromosome"/>
</dbReference>
<dbReference type="GO" id="GO:0005829">
    <property type="term" value="C:cytosol"/>
    <property type="evidence" value="ECO:0007669"/>
    <property type="project" value="TreeGrafter"/>
</dbReference>
<dbReference type="CDD" id="cd01462">
    <property type="entry name" value="VWA_YIEM_type"/>
    <property type="match status" value="1"/>
</dbReference>
<dbReference type="Gene3D" id="3.40.50.410">
    <property type="entry name" value="von Willebrand factor, type A domain"/>
    <property type="match status" value="1"/>
</dbReference>
<dbReference type="HAMAP" id="MF_01626">
    <property type="entry name" value="ViaA"/>
    <property type="match status" value="1"/>
</dbReference>
<dbReference type="InterPro" id="IPR008912">
    <property type="entry name" value="Uncharacterised_CoxE"/>
</dbReference>
<dbReference type="InterPro" id="IPR023481">
    <property type="entry name" value="Uncharacterised_ViaA"/>
</dbReference>
<dbReference type="InterPro" id="IPR002035">
    <property type="entry name" value="VWF_A"/>
</dbReference>
<dbReference type="InterPro" id="IPR036465">
    <property type="entry name" value="vWFA_dom_sf"/>
</dbReference>
<dbReference type="NCBIfam" id="NF008230">
    <property type="entry name" value="PRK10997.1"/>
    <property type="match status" value="1"/>
</dbReference>
<dbReference type="PANTHER" id="PTHR36846">
    <property type="entry name" value="PROTEIN VIAA"/>
    <property type="match status" value="1"/>
</dbReference>
<dbReference type="PANTHER" id="PTHR36846:SF1">
    <property type="entry name" value="PROTEIN VIAA"/>
    <property type="match status" value="1"/>
</dbReference>
<dbReference type="Pfam" id="PF05762">
    <property type="entry name" value="VWA_CoxE"/>
    <property type="match status" value="1"/>
</dbReference>
<dbReference type="SMART" id="SM00327">
    <property type="entry name" value="VWA"/>
    <property type="match status" value="1"/>
</dbReference>
<dbReference type="SUPFAM" id="SSF53300">
    <property type="entry name" value="vWA-like"/>
    <property type="match status" value="1"/>
</dbReference>
<gene>
    <name evidence="1" type="primary">viaA</name>
    <name type="ordered locus">SDY_4003</name>
</gene>
<accession>Q329T4</accession>
<name>VIAA_SHIDS</name>
<protein>
    <recommendedName>
        <fullName evidence="1">Regulatory protein ViaA</fullName>
    </recommendedName>
    <alternativeName>
        <fullName evidence="1">VWA interacting with AAA+ ATPase</fullName>
    </alternativeName>
</protein>
<reference key="1">
    <citation type="journal article" date="2005" name="Nucleic Acids Res.">
        <title>Genome dynamics and diversity of Shigella species, the etiologic agents of bacillary dysentery.</title>
        <authorList>
            <person name="Yang F."/>
            <person name="Yang J."/>
            <person name="Zhang X."/>
            <person name="Chen L."/>
            <person name="Jiang Y."/>
            <person name="Yan Y."/>
            <person name="Tang X."/>
            <person name="Wang J."/>
            <person name="Xiong Z."/>
            <person name="Dong J."/>
            <person name="Xue Y."/>
            <person name="Zhu Y."/>
            <person name="Xu X."/>
            <person name="Sun L."/>
            <person name="Chen S."/>
            <person name="Nie H."/>
            <person name="Peng J."/>
            <person name="Xu J."/>
            <person name="Wang Y."/>
            <person name="Yuan Z."/>
            <person name="Wen Y."/>
            <person name="Yao Z."/>
            <person name="Shen Y."/>
            <person name="Qiang B."/>
            <person name="Hou Y."/>
            <person name="Yu J."/>
            <person name="Jin Q."/>
        </authorList>
    </citation>
    <scope>NUCLEOTIDE SEQUENCE [LARGE SCALE GENOMIC DNA]</scope>
    <source>
        <strain>Sd197</strain>
    </source>
</reference>
<proteinExistence type="inferred from homology"/>
<organism>
    <name type="scientific">Shigella dysenteriae serotype 1 (strain Sd197)</name>
    <dbReference type="NCBI Taxonomy" id="300267"/>
    <lineage>
        <taxon>Bacteria</taxon>
        <taxon>Pseudomonadati</taxon>
        <taxon>Pseudomonadota</taxon>
        <taxon>Gammaproteobacteria</taxon>
        <taxon>Enterobacterales</taxon>
        <taxon>Enterobacteriaceae</taxon>
        <taxon>Shigella</taxon>
    </lineage>
</organism>
<evidence type="ECO:0000255" key="1">
    <source>
        <dbReference type="HAMAP-Rule" id="MF_01626"/>
    </source>
</evidence>
<feature type="chain" id="PRO_0000196591" description="Regulatory protein ViaA">
    <location>
        <begin position="1"/>
        <end position="483"/>
    </location>
</feature>
<comment type="function">
    <text evidence="1">Component of the RavA-ViaA chaperone complex, which may act on the membrane to optimize the function of some of the respiratory chains. ViaA stimulates the ATPase activity of RavA.</text>
</comment>
<comment type="subunit">
    <text evidence="1">Homodimer. Interacts with RavA.</text>
</comment>
<comment type="subcellular location">
    <subcellularLocation>
        <location evidence="1">Cytoplasm</location>
    </subcellularLocation>
</comment>
<comment type="similarity">
    <text evidence="1">Belongs to the ViaA family.</text>
</comment>